<name>TAGD_BACSU</name>
<gene>
    <name evidence="5" type="primary">tagD</name>
    <name type="ordered locus">BSU35740</name>
</gene>
<protein>
    <recommendedName>
        <fullName evidence="5">Glycerol-3-phosphate cytidylyltransferase</fullName>
        <shortName>GCT</shortName>
        <shortName evidence="5">GCTase</shortName>
        <shortName>Gro-PCT</shortName>
        <ecNumber evidence="2 3">2.7.7.39</ecNumber>
    </recommendedName>
    <alternativeName>
        <fullName>CDP-glycerol pyrophosphorylase</fullName>
    </alternativeName>
    <alternativeName>
        <fullName>Teichoic acid biosynthesis protein D</fullName>
    </alternativeName>
</protein>
<dbReference type="EC" id="2.7.7.39" evidence="2 3"/>
<dbReference type="EMBL" id="M57497">
    <property type="protein sequence ID" value="AAA22843.1"/>
    <property type="molecule type" value="Genomic_DNA"/>
</dbReference>
<dbReference type="EMBL" id="AL009126">
    <property type="protein sequence ID" value="CAB15591.1"/>
    <property type="molecule type" value="Genomic_DNA"/>
</dbReference>
<dbReference type="PIR" id="A49757">
    <property type="entry name" value="A49757"/>
</dbReference>
<dbReference type="RefSeq" id="NP_391455.1">
    <property type="nucleotide sequence ID" value="NC_000964.3"/>
</dbReference>
<dbReference type="RefSeq" id="WP_003227921.1">
    <property type="nucleotide sequence ID" value="NZ_OZ025638.1"/>
</dbReference>
<dbReference type="PDB" id="1COZ">
    <property type="method" value="X-ray"/>
    <property type="resolution" value="2.00 A"/>
    <property type="chains" value="A/B=1-129"/>
</dbReference>
<dbReference type="PDB" id="1N1D">
    <property type="method" value="X-ray"/>
    <property type="resolution" value="2.00 A"/>
    <property type="chains" value="A/B/C/D=1-129"/>
</dbReference>
<dbReference type="PDBsum" id="1COZ"/>
<dbReference type="PDBsum" id="1N1D"/>
<dbReference type="SMR" id="P27623"/>
<dbReference type="FunCoup" id="P27623">
    <property type="interactions" value="57"/>
</dbReference>
<dbReference type="STRING" id="224308.BSU35740"/>
<dbReference type="DrugBank" id="DB02484">
    <property type="generic name" value="Cytidine 5'-diphosphoglycerol"/>
</dbReference>
<dbReference type="DrugBank" id="DB02431">
    <property type="generic name" value="Cytidine-5'-Triphosphate"/>
</dbReference>
<dbReference type="jPOST" id="P27623"/>
<dbReference type="PaxDb" id="224308-BSU35740"/>
<dbReference type="EnsemblBacteria" id="CAB15591">
    <property type="protein sequence ID" value="CAB15591"/>
    <property type="gene ID" value="BSU_35740"/>
</dbReference>
<dbReference type="GeneID" id="86871818"/>
<dbReference type="GeneID" id="936809"/>
<dbReference type="KEGG" id="bsu:BSU35740"/>
<dbReference type="PATRIC" id="fig|224308.179.peg.3869"/>
<dbReference type="eggNOG" id="COG0615">
    <property type="taxonomic scope" value="Bacteria"/>
</dbReference>
<dbReference type="InParanoid" id="P27623"/>
<dbReference type="OrthoDB" id="9802794at2"/>
<dbReference type="PhylomeDB" id="P27623"/>
<dbReference type="BioCyc" id="BSUB:BSU35740-MONOMER"/>
<dbReference type="BioCyc" id="MetaCyc:BSU35740-MONOMER"/>
<dbReference type="BRENDA" id="2.7.7.39">
    <property type="organism ID" value="658"/>
</dbReference>
<dbReference type="UniPathway" id="UPA00789"/>
<dbReference type="UniPathway" id="UPA00827"/>
<dbReference type="EvolutionaryTrace" id="P27623"/>
<dbReference type="Proteomes" id="UP000001570">
    <property type="component" value="Chromosome"/>
</dbReference>
<dbReference type="GO" id="GO:0005737">
    <property type="term" value="C:cytoplasm"/>
    <property type="evidence" value="ECO:0007669"/>
    <property type="project" value="UniProtKB-SubCell"/>
</dbReference>
<dbReference type="GO" id="GO:0047348">
    <property type="term" value="F:glycerol-3-phosphate cytidylyltransferase activity"/>
    <property type="evidence" value="ECO:0007669"/>
    <property type="project" value="UniProtKB-EC"/>
</dbReference>
<dbReference type="GO" id="GO:0046872">
    <property type="term" value="F:metal ion binding"/>
    <property type="evidence" value="ECO:0007669"/>
    <property type="project" value="InterPro"/>
</dbReference>
<dbReference type="GO" id="GO:0071555">
    <property type="term" value="P:cell wall organization"/>
    <property type="evidence" value="ECO:0007669"/>
    <property type="project" value="UniProtKB-KW"/>
</dbReference>
<dbReference type="GO" id="GO:0019350">
    <property type="term" value="P:teichoic acid biosynthetic process"/>
    <property type="evidence" value="ECO:0007669"/>
    <property type="project" value="UniProtKB-KW"/>
</dbReference>
<dbReference type="CDD" id="cd02171">
    <property type="entry name" value="G3P_Cytidylyltransferase"/>
    <property type="match status" value="1"/>
</dbReference>
<dbReference type="Gene3D" id="3.40.50.620">
    <property type="entry name" value="HUPs"/>
    <property type="match status" value="1"/>
</dbReference>
<dbReference type="InterPro" id="IPR050385">
    <property type="entry name" value="Archaeal_FAD_synthase"/>
</dbReference>
<dbReference type="InterPro" id="IPR004821">
    <property type="entry name" value="Cyt_trans-like"/>
</dbReference>
<dbReference type="InterPro" id="IPR006409">
    <property type="entry name" value="G3P_cytidylTrfase"/>
</dbReference>
<dbReference type="InterPro" id="IPR014729">
    <property type="entry name" value="Rossmann-like_a/b/a_fold"/>
</dbReference>
<dbReference type="NCBIfam" id="TIGR00125">
    <property type="entry name" value="cyt_tran_rel"/>
    <property type="match status" value="1"/>
</dbReference>
<dbReference type="NCBIfam" id="TIGR01518">
    <property type="entry name" value="g3p_cytidyltrns"/>
    <property type="match status" value="1"/>
</dbReference>
<dbReference type="PANTHER" id="PTHR43793">
    <property type="entry name" value="FAD SYNTHASE"/>
    <property type="match status" value="1"/>
</dbReference>
<dbReference type="PANTHER" id="PTHR43793:SF1">
    <property type="entry name" value="FAD SYNTHASE"/>
    <property type="match status" value="1"/>
</dbReference>
<dbReference type="Pfam" id="PF01467">
    <property type="entry name" value="CTP_transf_like"/>
    <property type="match status" value="1"/>
</dbReference>
<dbReference type="SUPFAM" id="SSF52374">
    <property type="entry name" value="Nucleotidylyl transferase"/>
    <property type="match status" value="1"/>
</dbReference>
<reference key="1">
    <citation type="journal article" date="1991" name="J. Gen. Microbiol.">
        <title>Genes concerned with synthesis of poly(glycerol phosphate), the essential teichoic acid in Bacillus subtilis strain 168, are organized in two divergent transcription units.</title>
        <authorList>
            <person name="Maueel C."/>
            <person name="Young M."/>
            <person name="Karamata D."/>
        </authorList>
    </citation>
    <scope>NUCLEOTIDE SEQUENCE [GENOMIC DNA]</scope>
    <source>
        <strain>168</strain>
    </source>
</reference>
<reference key="2">
    <citation type="journal article" date="1993" name="J. Biol. Chem.">
        <title>Expression, purification, and characterization of CTP:glycerol-3-phosphate cytidylyltransferase from Bacillus subtilis.</title>
        <authorList>
            <person name="Park Y.S."/>
            <person name="Sweitzer T.D."/>
            <person name="Dixon J.E."/>
            <person name="Kent C."/>
        </authorList>
    </citation>
    <scope>NUCLEOTIDE SEQUENCE [GENOMIC DNA]</scope>
    <scope>PROTEIN SEQUENCE OF 1-10</scope>
    <scope>FUNCTION</scope>
    <scope>CATALYTIC ACTIVITY</scope>
    <scope>SUBUNIT</scope>
    <scope>BIOPHYSICOCHEMICAL PROPERTIES</scope>
    <scope>SUBSTRATE SPECIFICITY</scope>
    <scope>SUBCELLULAR LOCATION</scope>
    <source>
        <strain>168 / BR151</strain>
    </source>
</reference>
<reference key="3">
    <citation type="journal article" date="1997" name="Nature">
        <title>The complete genome sequence of the Gram-positive bacterium Bacillus subtilis.</title>
        <authorList>
            <person name="Kunst F."/>
            <person name="Ogasawara N."/>
            <person name="Moszer I."/>
            <person name="Albertini A.M."/>
            <person name="Alloni G."/>
            <person name="Azevedo V."/>
            <person name="Bertero M.G."/>
            <person name="Bessieres P."/>
            <person name="Bolotin A."/>
            <person name="Borchert S."/>
            <person name="Borriss R."/>
            <person name="Boursier L."/>
            <person name="Brans A."/>
            <person name="Braun M."/>
            <person name="Brignell S.C."/>
            <person name="Bron S."/>
            <person name="Brouillet S."/>
            <person name="Bruschi C.V."/>
            <person name="Caldwell B."/>
            <person name="Capuano V."/>
            <person name="Carter N.M."/>
            <person name="Choi S.-K."/>
            <person name="Codani J.-J."/>
            <person name="Connerton I.F."/>
            <person name="Cummings N.J."/>
            <person name="Daniel R.A."/>
            <person name="Denizot F."/>
            <person name="Devine K.M."/>
            <person name="Duesterhoeft A."/>
            <person name="Ehrlich S.D."/>
            <person name="Emmerson P.T."/>
            <person name="Entian K.-D."/>
            <person name="Errington J."/>
            <person name="Fabret C."/>
            <person name="Ferrari E."/>
            <person name="Foulger D."/>
            <person name="Fritz C."/>
            <person name="Fujita M."/>
            <person name="Fujita Y."/>
            <person name="Fuma S."/>
            <person name="Galizzi A."/>
            <person name="Galleron N."/>
            <person name="Ghim S.-Y."/>
            <person name="Glaser P."/>
            <person name="Goffeau A."/>
            <person name="Golightly E.J."/>
            <person name="Grandi G."/>
            <person name="Guiseppi G."/>
            <person name="Guy B.J."/>
            <person name="Haga K."/>
            <person name="Haiech J."/>
            <person name="Harwood C.R."/>
            <person name="Henaut A."/>
            <person name="Hilbert H."/>
            <person name="Holsappel S."/>
            <person name="Hosono S."/>
            <person name="Hullo M.-F."/>
            <person name="Itaya M."/>
            <person name="Jones L.-M."/>
            <person name="Joris B."/>
            <person name="Karamata D."/>
            <person name="Kasahara Y."/>
            <person name="Klaerr-Blanchard M."/>
            <person name="Klein C."/>
            <person name="Kobayashi Y."/>
            <person name="Koetter P."/>
            <person name="Koningstein G."/>
            <person name="Krogh S."/>
            <person name="Kumano M."/>
            <person name="Kurita K."/>
            <person name="Lapidus A."/>
            <person name="Lardinois S."/>
            <person name="Lauber J."/>
            <person name="Lazarevic V."/>
            <person name="Lee S.-M."/>
            <person name="Levine A."/>
            <person name="Liu H."/>
            <person name="Masuda S."/>
            <person name="Mauel C."/>
            <person name="Medigue C."/>
            <person name="Medina N."/>
            <person name="Mellado R.P."/>
            <person name="Mizuno M."/>
            <person name="Moestl D."/>
            <person name="Nakai S."/>
            <person name="Noback M."/>
            <person name="Noone D."/>
            <person name="O'Reilly M."/>
            <person name="Ogawa K."/>
            <person name="Ogiwara A."/>
            <person name="Oudega B."/>
            <person name="Park S.-H."/>
            <person name="Parro V."/>
            <person name="Pohl T.M."/>
            <person name="Portetelle D."/>
            <person name="Porwollik S."/>
            <person name="Prescott A.M."/>
            <person name="Presecan E."/>
            <person name="Pujic P."/>
            <person name="Purnelle B."/>
            <person name="Rapoport G."/>
            <person name="Rey M."/>
            <person name="Reynolds S."/>
            <person name="Rieger M."/>
            <person name="Rivolta C."/>
            <person name="Rocha E."/>
            <person name="Roche B."/>
            <person name="Rose M."/>
            <person name="Sadaie Y."/>
            <person name="Sato T."/>
            <person name="Scanlan E."/>
            <person name="Schleich S."/>
            <person name="Schroeter R."/>
            <person name="Scoffone F."/>
            <person name="Sekiguchi J."/>
            <person name="Sekowska A."/>
            <person name="Seror S.J."/>
            <person name="Serror P."/>
            <person name="Shin B.-S."/>
            <person name="Soldo B."/>
            <person name="Sorokin A."/>
            <person name="Tacconi E."/>
            <person name="Takagi T."/>
            <person name="Takahashi H."/>
            <person name="Takemaru K."/>
            <person name="Takeuchi M."/>
            <person name="Tamakoshi A."/>
            <person name="Tanaka T."/>
            <person name="Terpstra P."/>
            <person name="Tognoni A."/>
            <person name="Tosato V."/>
            <person name="Uchiyama S."/>
            <person name="Vandenbol M."/>
            <person name="Vannier F."/>
            <person name="Vassarotti A."/>
            <person name="Viari A."/>
            <person name="Wambutt R."/>
            <person name="Wedler E."/>
            <person name="Wedler H."/>
            <person name="Weitzenegger T."/>
            <person name="Winters P."/>
            <person name="Wipat A."/>
            <person name="Yamamoto H."/>
            <person name="Yamane K."/>
            <person name="Yasumoto K."/>
            <person name="Yata K."/>
            <person name="Yoshida K."/>
            <person name="Yoshikawa H.-F."/>
            <person name="Zumstein E."/>
            <person name="Yoshikawa H."/>
            <person name="Danchin A."/>
        </authorList>
    </citation>
    <scope>NUCLEOTIDE SEQUENCE [LARGE SCALE GENOMIC DNA]</scope>
    <source>
        <strain>168</strain>
    </source>
</reference>
<reference key="4">
    <citation type="journal article" date="1997" name="J. Biol. Chem.">
        <title>Identification of functional conserved residues of CTP:glycerol-3-phosphate cytidylyltransferase. Role of histidines in the conserved HXGH in catalysis.</title>
        <authorList>
            <person name="Park Y.S."/>
            <person name="Gee P."/>
            <person name="Sanker S."/>
            <person name="Schurter E.J."/>
            <person name="Zuiderweg E.R."/>
            <person name="Kent C."/>
        </authorList>
    </citation>
    <scope>MUTAGENESIS OF ASP-11; HIS-14; HIS-17; ASP-38; ARG-55; ARG-63; ASP-66; TRP-74; HIS-84; ASP-94; ARG-113; THR-114; SER-118 AND THR-119</scope>
</reference>
<reference key="5">
    <citation type="journal article" date="2001" name="J. Biol. Chem.">
        <title>Negative cooperativity of substrate binding but not enzyme activity in wild-type and mutant forms of CTP:glycerol-3-phosphate cytidylyltransferase.</title>
        <authorList>
            <person name="Sanker S."/>
            <person name="Campbell H.A."/>
            <person name="Kent C."/>
        </authorList>
    </citation>
    <scope>REACTION MECHANISM</scope>
</reference>
<reference key="6">
    <citation type="journal article" date="2003" name="Mol. Microbiol.">
        <title>Genes controlled by the essential YycG/YycF two-component system of Bacillus subtilis revealed through a novel hybrid regulator approach.</title>
        <authorList>
            <person name="Howell A."/>
            <person name="Dubrac S."/>
            <person name="Andersen K.K."/>
            <person name="Noone D."/>
            <person name="Fert J."/>
            <person name="Msadek T."/>
            <person name="Devine K."/>
        </authorList>
    </citation>
    <scope>REGULATION BY WALR/WALK</scope>
</reference>
<reference key="7">
    <citation type="journal article" date="1999" name="Structure">
        <title>A prototypical cytidylyltransferase: CTP:glycerol-3-phosphate cytidylyltransferase from Bacillus subtilis.</title>
        <authorList>
            <person name="Weber C.H."/>
            <person name="Park Y.S."/>
            <person name="Sanker S."/>
            <person name="Kent C."/>
            <person name="Ludwig M.L."/>
        </authorList>
    </citation>
    <scope>X-RAY CRYSTALLOGRAPHY (2.0 ANGSTROMS) OF COMPLEX WITH CTP</scope>
</reference>
<reference key="8">
    <citation type="journal article" date="2003" name="J. Biol. Chem.">
        <title>Glycerol-3-phosphate cytidylyltransferase. Structural changes induced by binding of CDP-glycerol and the role of lysine residues in catalysis.</title>
        <authorList>
            <person name="Pattridge K.A."/>
            <person name="Weber C.H."/>
            <person name="Friesen J.A."/>
            <person name="Sanker S."/>
            <person name="Kent C."/>
            <person name="Ludwig M.L."/>
        </authorList>
    </citation>
    <scope>X-RAY CRYSTALLOGRAPHY (2.0 ANGSTROMS) IN COMPLEX WITH CDP-GLYCEROL</scope>
    <scope>CATALYTIC ACTIVITY</scope>
    <scope>SUBUNIT</scope>
    <scope>MUTAGENESIS OF LYS-44 AND LYS-46</scope>
</reference>
<organism>
    <name type="scientific">Bacillus subtilis (strain 168)</name>
    <dbReference type="NCBI Taxonomy" id="224308"/>
    <lineage>
        <taxon>Bacteria</taxon>
        <taxon>Bacillati</taxon>
        <taxon>Bacillota</taxon>
        <taxon>Bacilli</taxon>
        <taxon>Bacillales</taxon>
        <taxon>Bacillaceae</taxon>
        <taxon>Bacillus</taxon>
    </lineage>
</organism>
<proteinExistence type="evidence at protein level"/>
<evidence type="ECO:0000269" key="1">
    <source>
    </source>
</evidence>
<evidence type="ECO:0000269" key="2">
    <source>
    </source>
</evidence>
<evidence type="ECO:0000269" key="3">
    <source>
    </source>
</evidence>
<evidence type="ECO:0000269" key="4">
    <source>
    </source>
</evidence>
<evidence type="ECO:0000303" key="5">
    <source>
    </source>
</evidence>
<evidence type="ECO:0000305" key="6"/>
<evidence type="ECO:0007829" key="7">
    <source>
        <dbReference type="PDB" id="1COZ"/>
    </source>
</evidence>
<evidence type="ECO:0007829" key="8">
    <source>
        <dbReference type="PDB" id="1N1D"/>
    </source>
</evidence>
<sequence length="129" mass="15272">MKKVITYGTFDLLHWGHIKLLERAKQLGDYLVVAISTDEFNLQKQKKAYHSYEHRKLILETIRYVDEVIPEKNWEQKKQDIIDHNIDVFVMGDDWEGKFDFLKDQCEVVYLPRTEGISTTKIKEEIAGL</sequence>
<accession>P27623</accession>
<feature type="chain" id="PRO_0000208466" description="Glycerol-3-phosphate cytidylyltransferase">
    <location>
        <begin position="1"/>
        <end position="129"/>
    </location>
</feature>
<feature type="binding site" evidence="1 2">
    <location>
        <begin position="9"/>
        <end position="10"/>
    </location>
    <ligand>
        <name>CTP</name>
        <dbReference type="ChEBI" id="CHEBI:37563"/>
    </ligand>
</feature>
<feature type="binding site" evidence="1 2">
    <location>
        <begin position="14"/>
        <end position="17"/>
    </location>
    <ligand>
        <name>CTP</name>
        <dbReference type="ChEBI" id="CHEBI:37563"/>
    </ligand>
</feature>
<feature type="binding site" evidence="2">
    <location>
        <position position="44"/>
    </location>
    <ligand>
        <name>substrate</name>
    </ligand>
</feature>
<feature type="binding site" evidence="1 2">
    <location>
        <position position="46"/>
    </location>
    <ligand>
        <name>CTP</name>
        <dbReference type="ChEBI" id="CHEBI:37563"/>
    </ligand>
</feature>
<feature type="binding site" evidence="2">
    <location>
        <position position="77"/>
    </location>
    <ligand>
        <name>substrate</name>
    </ligand>
</feature>
<feature type="binding site" evidence="1 2">
    <location>
        <begin position="113"/>
        <end position="120"/>
    </location>
    <ligand>
        <name>CTP</name>
        <dbReference type="ChEBI" id="CHEBI:37563"/>
    </ligand>
</feature>
<feature type="mutagenesis site" description="0.1% of wild-type activity." evidence="4">
    <original>D</original>
    <variation>A</variation>
    <variation>E</variation>
    <location>
        <position position="11"/>
    </location>
</feature>
<feature type="mutagenesis site" description="Complete loss of activity." evidence="4">
    <original>H</original>
    <variation>A</variation>
    <location>
        <position position="14"/>
    </location>
</feature>
<feature type="mutagenesis site" description="Complete loss of activity." evidence="4">
    <original>H</original>
    <variation>A</variation>
    <location>
        <position position="17"/>
    </location>
</feature>
<feature type="mutagenesis site" description="8% of wild-type activity, but 7-fold decrease in substrate affinity." evidence="4">
    <original>D</original>
    <variation>A</variation>
    <location>
        <position position="38"/>
    </location>
</feature>
<feature type="mutagenesis site" description="Reduces affinity for glycerol 3-phosphate about 100-fold." evidence="2">
    <original>K</original>
    <variation>A</variation>
    <location>
        <position position="44"/>
    </location>
</feature>
<feature type="mutagenesis site" description="Reduces affinity for glycerol 3-phosphate about 100-fold." evidence="2">
    <original>K</original>
    <variation>A</variation>
    <location>
        <position position="46"/>
    </location>
</feature>
<feature type="mutagenesis site" description="0.25% of wild-type activity." evidence="4">
    <original>R</original>
    <variation>A</variation>
    <location>
        <position position="55"/>
    </location>
</feature>
<feature type="mutagenesis site" description="23% of wild-type activity." evidence="4">
    <original>R</original>
    <variation>K</variation>
    <location>
        <position position="55"/>
    </location>
</feature>
<feature type="mutagenesis site" description="14% of wild-type activity." evidence="4">
    <original>R</original>
    <variation>A</variation>
    <location>
        <position position="63"/>
    </location>
</feature>
<feature type="mutagenesis site" description="Complete loss of activity, and widespread change in 3D-structure." evidence="4">
    <original>D</original>
    <variation>A</variation>
    <location>
        <position position="66"/>
    </location>
</feature>
<feature type="mutagenesis site" description="16% of wild-type activity." evidence="4">
    <original>D</original>
    <variation>E</variation>
    <location>
        <position position="66"/>
    </location>
</feature>
<feature type="mutagenesis site" description="50% of wild-type activity, but 9-fold decrease in substrate affinity." evidence="4">
    <original>W</original>
    <variation>A</variation>
    <location>
        <position position="74"/>
    </location>
</feature>
<feature type="mutagenesis site" description="Complete loss of activity." evidence="4">
    <original>H</original>
    <variation>A</variation>
    <location>
        <position position="84"/>
    </location>
</feature>
<feature type="mutagenesis site" description="18% of wild-type activity, but 100-fold decrease in substrate affinity." evidence="4">
    <original>D</original>
    <variation>A</variation>
    <location>
        <position position="94"/>
    </location>
</feature>
<feature type="mutagenesis site" description="1.75% of wild-type activity." evidence="4">
    <original>R</original>
    <variation>A</variation>
    <location>
        <position position="113"/>
    </location>
</feature>
<feature type="mutagenesis site" description="Complete loss of activity." evidence="4">
    <original>R</original>
    <variation>K</variation>
    <location>
        <position position="113"/>
    </location>
</feature>
<feature type="mutagenesis site" description="9% of wild-type activity." evidence="4">
    <original>T</original>
    <variation>A</variation>
    <location>
        <position position="114"/>
    </location>
</feature>
<feature type="mutagenesis site" description="6% of wild-type activity." evidence="4">
    <original>S</original>
    <variation>A</variation>
    <location>
        <position position="118"/>
    </location>
</feature>
<feature type="mutagenesis site" description="8% of wild-type activity." evidence="4">
    <original>T</original>
    <variation>A</variation>
    <location>
        <position position="119"/>
    </location>
</feature>
<feature type="strand" evidence="7">
    <location>
        <begin position="3"/>
        <end position="8"/>
    </location>
</feature>
<feature type="helix" evidence="7">
    <location>
        <begin position="15"/>
        <end position="25"/>
    </location>
</feature>
<feature type="strand" evidence="7">
    <location>
        <begin position="28"/>
        <end position="36"/>
    </location>
</feature>
<feature type="helix" evidence="7">
    <location>
        <begin position="38"/>
        <end position="44"/>
    </location>
</feature>
<feature type="helix" evidence="7">
    <location>
        <begin position="52"/>
        <end position="59"/>
    </location>
</feature>
<feature type="strand" evidence="7">
    <location>
        <begin position="67"/>
        <end position="71"/>
    </location>
</feature>
<feature type="helix" evidence="8">
    <location>
        <begin position="74"/>
        <end position="76"/>
    </location>
</feature>
<feature type="helix" evidence="7">
    <location>
        <begin position="77"/>
        <end position="83"/>
    </location>
</feature>
<feature type="strand" evidence="7">
    <location>
        <begin position="87"/>
        <end position="92"/>
    </location>
</feature>
<feature type="helix" evidence="7">
    <location>
        <begin position="93"/>
        <end position="95"/>
    </location>
</feature>
<feature type="turn" evidence="7">
    <location>
        <begin position="96"/>
        <end position="99"/>
    </location>
</feature>
<feature type="helix" evidence="7">
    <location>
        <begin position="100"/>
        <end position="102"/>
    </location>
</feature>
<feature type="turn" evidence="7">
    <location>
        <begin position="103"/>
        <end position="105"/>
    </location>
</feature>
<feature type="strand" evidence="7">
    <location>
        <begin position="106"/>
        <end position="111"/>
    </location>
</feature>
<feature type="helix" evidence="7">
    <location>
        <begin position="119"/>
        <end position="124"/>
    </location>
</feature>
<keyword id="KW-0002">3D-structure</keyword>
<keyword id="KW-0961">Cell wall biogenesis/degradation</keyword>
<keyword id="KW-0963">Cytoplasm</keyword>
<keyword id="KW-0903">Direct protein sequencing</keyword>
<keyword id="KW-0548">Nucleotidyltransferase</keyword>
<keyword id="KW-1185">Reference proteome</keyword>
<keyword id="KW-0777">Teichoic acid biosynthesis</keyword>
<keyword id="KW-0808">Transferase</keyword>
<comment type="function">
    <text evidence="3">Catalyzes the transfer of the cytidylyl group of CTP to sn-glycerol 3-phosphate so the activated glycerol 3-phosphate can be used for teichoic acid synthesis, via incorporation into both the linkage unit and the teichoic acid polymer by TagB and TagF.</text>
</comment>
<comment type="catalytic activity">
    <reaction evidence="2 3">
        <text>sn-glycerol 3-phosphate + CTP + H(+) = CDP-glycerol + diphosphate</text>
        <dbReference type="Rhea" id="RHEA:13361"/>
        <dbReference type="ChEBI" id="CHEBI:15378"/>
        <dbReference type="ChEBI" id="CHEBI:33019"/>
        <dbReference type="ChEBI" id="CHEBI:37563"/>
        <dbReference type="ChEBI" id="CHEBI:57597"/>
        <dbReference type="ChEBI" id="CHEBI:58311"/>
        <dbReference type="EC" id="2.7.7.39"/>
    </reaction>
</comment>
<comment type="activity regulation">
    <text>Inhibited by the divalent cations cadmium, mercury, tin, copper and zinc.</text>
</comment>
<comment type="biophysicochemical properties">
    <kinetics>
        <KM evidence="3">3.85 mM for CTP</KM>
        <KM evidence="3">3.23 mM for glycerol 3-phosphate</KM>
        <Vmax evidence="3">185.0 umol/min/mg enzyme</Vmax>
    </kinetics>
    <phDependence>
        <text evidence="3">Optimum pH is 6.5-9.5.</text>
    </phDependence>
    <temperatureDependence>
        <text evidence="3">Optimum temperature is 50 degrees Celsius.</text>
    </temperatureDependence>
</comment>
<comment type="pathway">
    <text>Cell wall biogenesis; poly(glucopyranosyl N-acetylgalactosamine 1-phosphate) teichoic acid biosynthesis.</text>
</comment>
<comment type="pathway">
    <text>Cell wall biogenesis; poly(glycerol phosphate) teichoic acid biosynthesis.</text>
</comment>
<comment type="subunit">
    <text evidence="2 3">Homodimer.</text>
</comment>
<comment type="subcellular location">
    <subcellularLocation>
        <location evidence="5">Cytoplasm</location>
    </subcellularLocation>
</comment>
<comment type="induction">
    <text>Positively regulated by WalR. Mainly expressed during exponential growth and rapidly shut off as cells enter the stationary phase.</text>
</comment>
<comment type="miscellaneous">
    <text>Proceeds via a random order reaction mechanism where there is negative cooperativity in the binding of substrates but not in catalysis.</text>
</comment>
<comment type="similarity">
    <text evidence="6">Belongs to the cytidylyltransferase family.</text>
</comment>